<sequence length="143" mass="15911">MIRKSKKITKMRGSRTCGYGEAKKHRGAGHRGGRGNAGHQKHKWLSVCKFNPDYFGKYGFNRNPGLIKQLETINIGELEEYILKYKDAFQVEDGKVVVDATEIGYEKVLGKGRISTAMVVKAVEFSEGAKEKIEAAGGEFVEL</sequence>
<reference key="1">
    <citation type="submission" date="2007-06" db="EMBL/GenBank/DDBJ databases">
        <title>Complete sequence of Methanococcus maripaludis C7.</title>
        <authorList>
            <consortium name="US DOE Joint Genome Institute"/>
            <person name="Copeland A."/>
            <person name="Lucas S."/>
            <person name="Lapidus A."/>
            <person name="Barry K."/>
            <person name="Glavina del Rio T."/>
            <person name="Dalin E."/>
            <person name="Tice H."/>
            <person name="Pitluck S."/>
            <person name="Clum A."/>
            <person name="Schmutz J."/>
            <person name="Larimer F."/>
            <person name="Land M."/>
            <person name="Hauser L."/>
            <person name="Kyrpides N."/>
            <person name="Anderson I."/>
            <person name="Sieprawska-Lupa M."/>
            <person name="Whitman W.B."/>
            <person name="Richardson P."/>
        </authorList>
    </citation>
    <scope>NUCLEOTIDE SEQUENCE [LARGE SCALE GENOMIC DNA]</scope>
    <source>
        <strain>C7 / ATCC BAA-1331</strain>
    </source>
</reference>
<dbReference type="EMBL" id="CP000745">
    <property type="protein sequence ID" value="ABR65733.1"/>
    <property type="molecule type" value="Genomic_DNA"/>
</dbReference>
<dbReference type="SMR" id="A6VH07"/>
<dbReference type="STRING" id="426368.MmarC7_0666"/>
<dbReference type="KEGG" id="mmz:MmarC7_0666"/>
<dbReference type="eggNOG" id="arCOG00779">
    <property type="taxonomic scope" value="Archaea"/>
</dbReference>
<dbReference type="HOGENOM" id="CLU_109163_0_0_2"/>
<dbReference type="OrthoDB" id="9418at2157"/>
<dbReference type="GO" id="GO:0022625">
    <property type="term" value="C:cytosolic large ribosomal subunit"/>
    <property type="evidence" value="ECO:0007669"/>
    <property type="project" value="TreeGrafter"/>
</dbReference>
<dbReference type="GO" id="GO:0019843">
    <property type="term" value="F:rRNA binding"/>
    <property type="evidence" value="ECO:0007669"/>
    <property type="project" value="UniProtKB-UniRule"/>
</dbReference>
<dbReference type="GO" id="GO:0003735">
    <property type="term" value="F:structural constituent of ribosome"/>
    <property type="evidence" value="ECO:0007669"/>
    <property type="project" value="InterPro"/>
</dbReference>
<dbReference type="GO" id="GO:0006412">
    <property type="term" value="P:translation"/>
    <property type="evidence" value="ECO:0007669"/>
    <property type="project" value="UniProtKB-UniRule"/>
</dbReference>
<dbReference type="Gene3D" id="3.100.10.10">
    <property type="match status" value="1"/>
</dbReference>
<dbReference type="Gene3D" id="4.10.990.10">
    <property type="match status" value="1"/>
</dbReference>
<dbReference type="HAMAP" id="MF_01341">
    <property type="entry name" value="Ribosomal_uL15"/>
    <property type="match status" value="1"/>
</dbReference>
<dbReference type="InterPro" id="IPR027386">
    <property type="entry name" value="Rbsml_uL15_N"/>
</dbReference>
<dbReference type="InterPro" id="IPR030878">
    <property type="entry name" value="Ribosomal_uL15"/>
</dbReference>
<dbReference type="InterPro" id="IPR021131">
    <property type="entry name" value="Ribosomal_uL15/eL18"/>
</dbReference>
<dbReference type="InterPro" id="IPR036227">
    <property type="entry name" value="Ribosomal_uL15/eL18_sf"/>
</dbReference>
<dbReference type="InterPro" id="IPR001196">
    <property type="entry name" value="Ribosomal_uL15_CS"/>
</dbReference>
<dbReference type="PANTHER" id="PTHR11721">
    <property type="entry name" value="60S RIBOSOMAL PROTEIN L27A"/>
    <property type="match status" value="1"/>
</dbReference>
<dbReference type="PANTHER" id="PTHR11721:SF3">
    <property type="entry name" value="LARGE RIBOSOMAL SUBUNIT PROTEIN UL15"/>
    <property type="match status" value="1"/>
</dbReference>
<dbReference type="Pfam" id="PF00828">
    <property type="entry name" value="Ribosomal_L27A"/>
    <property type="match status" value="1"/>
</dbReference>
<dbReference type="SUPFAM" id="SSF52080">
    <property type="entry name" value="Ribosomal proteins L15p and L18e"/>
    <property type="match status" value="1"/>
</dbReference>
<dbReference type="PROSITE" id="PS00475">
    <property type="entry name" value="RIBOSOMAL_L15"/>
    <property type="match status" value="1"/>
</dbReference>
<proteinExistence type="inferred from homology"/>
<accession>A6VH07</accession>
<organism>
    <name type="scientific">Methanococcus maripaludis (strain C7 / ATCC BAA-1331)</name>
    <dbReference type="NCBI Taxonomy" id="426368"/>
    <lineage>
        <taxon>Archaea</taxon>
        <taxon>Methanobacteriati</taxon>
        <taxon>Methanobacteriota</taxon>
        <taxon>Methanomada group</taxon>
        <taxon>Methanococci</taxon>
        <taxon>Methanococcales</taxon>
        <taxon>Methanococcaceae</taxon>
        <taxon>Methanococcus</taxon>
    </lineage>
</organism>
<keyword id="KW-0687">Ribonucleoprotein</keyword>
<keyword id="KW-0689">Ribosomal protein</keyword>
<keyword id="KW-0694">RNA-binding</keyword>
<keyword id="KW-0699">rRNA-binding</keyword>
<evidence type="ECO:0000255" key="1">
    <source>
        <dbReference type="HAMAP-Rule" id="MF_01341"/>
    </source>
</evidence>
<evidence type="ECO:0000256" key="2">
    <source>
        <dbReference type="SAM" id="MobiDB-lite"/>
    </source>
</evidence>
<evidence type="ECO:0000305" key="3"/>
<name>RL15_METM7</name>
<comment type="function">
    <text evidence="1">Binds to the 23S rRNA.</text>
</comment>
<comment type="subunit">
    <text evidence="1">Part of the 50S ribosomal subunit.</text>
</comment>
<comment type="similarity">
    <text evidence="1">Belongs to the universal ribosomal protein uL15 family.</text>
</comment>
<gene>
    <name evidence="1" type="primary">rpl15</name>
    <name type="ordered locus">MmarC7_0666</name>
</gene>
<feature type="chain" id="PRO_1000054492" description="Large ribosomal subunit protein uL15">
    <location>
        <begin position="1"/>
        <end position="143"/>
    </location>
</feature>
<feature type="region of interest" description="Disordered" evidence="2">
    <location>
        <begin position="1"/>
        <end position="38"/>
    </location>
</feature>
<feature type="compositionally biased region" description="Basic residues" evidence="2">
    <location>
        <begin position="1"/>
        <end position="13"/>
    </location>
</feature>
<feature type="compositionally biased region" description="Basic residues" evidence="2">
    <location>
        <begin position="23"/>
        <end position="38"/>
    </location>
</feature>
<protein>
    <recommendedName>
        <fullName evidence="1">Large ribosomal subunit protein uL15</fullName>
    </recommendedName>
    <alternativeName>
        <fullName evidence="3">50S ribosomal protein L15</fullName>
    </alternativeName>
</protein>